<dbReference type="EMBL" id="U33057">
    <property type="protein sequence ID" value="AAB64938.1"/>
    <property type="molecule type" value="Genomic_DNA"/>
</dbReference>
<dbReference type="EMBL" id="BK006938">
    <property type="protein sequence ID" value="DAA12328.1"/>
    <property type="molecule type" value="Genomic_DNA"/>
</dbReference>
<dbReference type="PIR" id="S69554">
    <property type="entry name" value="S69554"/>
</dbReference>
<dbReference type="RefSeq" id="NP_010784.1">
    <property type="nucleotide sequence ID" value="NM_001180804.1"/>
</dbReference>
<dbReference type="SMR" id="Q04373"/>
<dbReference type="BioGRID" id="32547">
    <property type="interactions" value="417"/>
</dbReference>
<dbReference type="DIP" id="DIP-6579N"/>
<dbReference type="FunCoup" id="Q04373">
    <property type="interactions" value="1156"/>
</dbReference>
<dbReference type="IntAct" id="Q04373">
    <property type="interactions" value="102"/>
</dbReference>
<dbReference type="MINT" id="Q04373"/>
<dbReference type="STRING" id="4932.YDR496C"/>
<dbReference type="GlyGen" id="Q04373">
    <property type="glycosylation" value="1 site, 1 O-linked glycan (1 site)"/>
</dbReference>
<dbReference type="iPTMnet" id="Q04373"/>
<dbReference type="PaxDb" id="4932-YDR496C"/>
<dbReference type="PeptideAtlas" id="Q04373"/>
<dbReference type="EnsemblFungi" id="YDR496C_mRNA">
    <property type="protein sequence ID" value="YDR496C"/>
    <property type="gene ID" value="YDR496C"/>
</dbReference>
<dbReference type="GeneID" id="852107"/>
<dbReference type="KEGG" id="sce:YDR496C"/>
<dbReference type="AGR" id="SGD:S000002904"/>
<dbReference type="SGD" id="S000002904">
    <property type="gene designation" value="PUF6"/>
</dbReference>
<dbReference type="VEuPathDB" id="FungiDB:YDR496C"/>
<dbReference type="eggNOG" id="KOG2050">
    <property type="taxonomic scope" value="Eukaryota"/>
</dbReference>
<dbReference type="GeneTree" id="ENSGT00390000015757"/>
<dbReference type="HOGENOM" id="CLU_013994_1_0_1"/>
<dbReference type="InParanoid" id="Q04373"/>
<dbReference type="OMA" id="YGPEFSI"/>
<dbReference type="OrthoDB" id="497380at2759"/>
<dbReference type="BioCyc" id="YEAST:G3O-30019-MONOMER"/>
<dbReference type="BioGRID-ORCS" id="852107">
    <property type="hits" value="3 hits in 10 CRISPR screens"/>
</dbReference>
<dbReference type="CD-CODE" id="BDAE0F88">
    <property type="entry name" value="Nucleolus"/>
</dbReference>
<dbReference type="PRO" id="PR:Q04373"/>
<dbReference type="Proteomes" id="UP000002311">
    <property type="component" value="Chromosome IV"/>
</dbReference>
<dbReference type="RNAct" id="Q04373">
    <property type="molecule type" value="protein"/>
</dbReference>
<dbReference type="GO" id="GO:0005934">
    <property type="term" value="C:cellular bud tip"/>
    <property type="evidence" value="ECO:0007669"/>
    <property type="project" value="UniProtKB-SubCell"/>
</dbReference>
<dbReference type="GO" id="GO:0015934">
    <property type="term" value="C:large ribosomal subunit"/>
    <property type="evidence" value="ECO:0000314"/>
    <property type="project" value="SGD"/>
</dbReference>
<dbReference type="GO" id="GO:0005730">
    <property type="term" value="C:nucleolus"/>
    <property type="evidence" value="ECO:0007005"/>
    <property type="project" value="SGD"/>
</dbReference>
<dbReference type="GO" id="GO:0005634">
    <property type="term" value="C:nucleus"/>
    <property type="evidence" value="ECO:0007005"/>
    <property type="project" value="SGD"/>
</dbReference>
<dbReference type="GO" id="GO:0030687">
    <property type="term" value="C:preribosome, large subunit precursor"/>
    <property type="evidence" value="ECO:0000314"/>
    <property type="project" value="SGD"/>
</dbReference>
<dbReference type="GO" id="GO:0101031">
    <property type="term" value="C:protein folding chaperone complex"/>
    <property type="evidence" value="ECO:0000315"/>
    <property type="project" value="SGD"/>
</dbReference>
<dbReference type="GO" id="GO:0070180">
    <property type="term" value="F:large ribosomal subunit rRNA binding"/>
    <property type="evidence" value="ECO:0000314"/>
    <property type="project" value="SGD"/>
</dbReference>
<dbReference type="GO" id="GO:0003730">
    <property type="term" value="F:mRNA 3'-UTR binding"/>
    <property type="evidence" value="ECO:0000314"/>
    <property type="project" value="SGD"/>
</dbReference>
<dbReference type="GO" id="GO:0048027">
    <property type="term" value="F:mRNA 5'-UTR binding"/>
    <property type="evidence" value="ECO:0000314"/>
    <property type="project" value="SGD"/>
</dbReference>
<dbReference type="GO" id="GO:0003729">
    <property type="term" value="F:mRNA binding"/>
    <property type="evidence" value="ECO:0007005"/>
    <property type="project" value="SGD"/>
</dbReference>
<dbReference type="GO" id="GO:0000900">
    <property type="term" value="F:mRNA regulatory element binding translation repressor activity"/>
    <property type="evidence" value="ECO:0000314"/>
    <property type="project" value="SGD"/>
</dbReference>
<dbReference type="GO" id="GO:0017148">
    <property type="term" value="P:negative regulation of translation"/>
    <property type="evidence" value="ECO:0000314"/>
    <property type="project" value="SGD"/>
</dbReference>
<dbReference type="GO" id="GO:0050821">
    <property type="term" value="P:protein stabilization"/>
    <property type="evidence" value="ECO:0000315"/>
    <property type="project" value="SGD"/>
</dbReference>
<dbReference type="GO" id="GO:0006417">
    <property type="term" value="P:regulation of translation"/>
    <property type="evidence" value="ECO:0000318"/>
    <property type="project" value="GO_Central"/>
</dbReference>
<dbReference type="GO" id="GO:0042273">
    <property type="term" value="P:ribosomal large subunit biogenesis"/>
    <property type="evidence" value="ECO:0000315"/>
    <property type="project" value="SGD"/>
</dbReference>
<dbReference type="Gene3D" id="1.25.10.10">
    <property type="entry name" value="Leucine-rich Repeat Variant"/>
    <property type="match status" value="1"/>
</dbReference>
<dbReference type="InterPro" id="IPR011989">
    <property type="entry name" value="ARM-like"/>
</dbReference>
<dbReference type="InterPro" id="IPR016024">
    <property type="entry name" value="ARM-type_fold"/>
</dbReference>
<dbReference type="InterPro" id="IPR012959">
    <property type="entry name" value="CPL_dom"/>
</dbReference>
<dbReference type="InterPro" id="IPR033133">
    <property type="entry name" value="PUM-HD"/>
</dbReference>
<dbReference type="InterPro" id="IPR040059">
    <property type="entry name" value="PUM3"/>
</dbReference>
<dbReference type="InterPro" id="IPR001313">
    <property type="entry name" value="Pumilio_RNA-bd_rpt"/>
</dbReference>
<dbReference type="PANTHER" id="PTHR13389">
    <property type="entry name" value="PUMILIO HOMOLOG 3"/>
    <property type="match status" value="1"/>
</dbReference>
<dbReference type="PANTHER" id="PTHR13389:SF0">
    <property type="entry name" value="PUMILIO HOMOLOG 3"/>
    <property type="match status" value="1"/>
</dbReference>
<dbReference type="Pfam" id="PF08144">
    <property type="entry name" value="CPL"/>
    <property type="match status" value="1"/>
</dbReference>
<dbReference type="Pfam" id="PF00806">
    <property type="entry name" value="PUF"/>
    <property type="match status" value="3"/>
</dbReference>
<dbReference type="SMART" id="SM00025">
    <property type="entry name" value="Pumilio"/>
    <property type="match status" value="6"/>
</dbReference>
<dbReference type="SUPFAM" id="SSF48371">
    <property type="entry name" value="ARM repeat"/>
    <property type="match status" value="1"/>
</dbReference>
<dbReference type="PROSITE" id="PS50302">
    <property type="entry name" value="PUM"/>
    <property type="match status" value="5"/>
</dbReference>
<dbReference type="PROSITE" id="PS50303">
    <property type="entry name" value="PUM_HD"/>
    <property type="match status" value="1"/>
</dbReference>
<gene>
    <name type="primary">PUF6</name>
    <name type="ordered locus">YDR496C</name>
    <name type="ORF">D9719.2</name>
</gene>
<feature type="chain" id="PRO_0000075926" description="Pumilio homology domain family member 6">
    <location>
        <begin position="1"/>
        <end position="656"/>
    </location>
</feature>
<feature type="domain" description="PUM-HD" evidence="1">
    <location>
        <begin position="133"/>
        <end position="483"/>
    </location>
</feature>
<feature type="repeat" description="Pumilio 1">
    <location>
        <begin position="155"/>
        <end position="191"/>
    </location>
</feature>
<feature type="repeat" description="Pumilio 2">
    <location>
        <begin position="192"/>
        <end position="227"/>
    </location>
</feature>
<feature type="repeat" description="Pumilio 3">
    <location>
        <begin position="228"/>
        <end position="264"/>
    </location>
</feature>
<feature type="repeat" description="Pumilio 4">
    <location>
        <begin position="340"/>
        <end position="376"/>
    </location>
</feature>
<feature type="repeat" description="Pumilio 5">
    <location>
        <begin position="377"/>
        <end position="413"/>
    </location>
</feature>
<feature type="repeat" description="Pumilio 6">
    <location>
        <begin position="415"/>
        <end position="450"/>
    </location>
</feature>
<feature type="region of interest" description="Disordered" evidence="2">
    <location>
        <begin position="1"/>
        <end position="107"/>
    </location>
</feature>
<feature type="compositionally biased region" description="Basic and acidic residues" evidence="2">
    <location>
        <begin position="13"/>
        <end position="23"/>
    </location>
</feature>
<feature type="compositionally biased region" description="Acidic residues" evidence="2">
    <location>
        <begin position="52"/>
        <end position="89"/>
    </location>
</feature>
<feature type="compositionally biased region" description="Basic and acidic residues" evidence="2">
    <location>
        <begin position="90"/>
        <end position="107"/>
    </location>
</feature>
<feature type="modified residue" description="Phosphoserine; by CK2" evidence="6">
    <location>
        <position position="31"/>
    </location>
</feature>
<feature type="modified residue" description="Phosphoserine" evidence="6 9 10 11">
    <location>
        <position position="34"/>
    </location>
</feature>
<feature type="modified residue" description="Phosphoserine; by CK2" evidence="6 9 10 11">
    <location>
        <position position="34"/>
    </location>
</feature>
<feature type="modified residue" description="Phosphoserine" evidence="6 9 10 11">
    <location>
        <position position="35"/>
    </location>
</feature>
<feature type="modified residue" description="Phosphoserine; by CK2" evidence="6 9 10 11">
    <location>
        <position position="35"/>
    </location>
</feature>
<feature type="mutagenesis site" description="Increases translation repression of ASH1 mRNA." evidence="6">
    <original>S</original>
    <variation>A</variation>
    <location>
        <position position="31"/>
    </location>
</feature>
<feature type="mutagenesis site" description="Increases translation repression of ASH1 mRNA." evidence="6">
    <original>S</original>
    <variation>A</variation>
    <location>
        <position position="34"/>
    </location>
</feature>
<feature type="mutagenesis site" description="Increases translation repression of ASH1 mRNA." evidence="6">
    <original>S</original>
    <variation>A</variation>
    <location>
        <position position="35"/>
    </location>
</feature>
<comment type="function">
    <text evidence="4 5 6">RNA-binding protein involved in post-transcriptional regulation. Component of the ASH1 mRNP which transports the ASH1 mRNA to the distal tip of the bud, where the ASH1 protein is translated and targeted to the daughter cell nucleus. Binds to the ASH1 3'-UTR containing the PUF consensus UUGU segment and represses its translation. This silencing of ASH1 mRNA is critical for asymmetric seggregation of ASH1 to the daughter cell nucleus.</text>
</comment>
<comment type="subunit">
    <text evidence="4 6 7">Component of the ASH1 mRNP composed of at least PUF6, SHE2, SHE3, SHE1 and the ASH1 mRNA. Interacts with SHE2 and FUN12.</text>
</comment>
<comment type="interaction">
    <interactant intactId="EBI-33208">
        <id>Q04373</id>
    </interactant>
    <interactant intactId="EBI-26866">
        <id>P36068</id>
        <label>SHE2</label>
    </interactant>
    <organismsDiffer>false</organismsDiffer>
    <experiments>2</experiments>
</comment>
<comment type="subcellular location">
    <subcellularLocation>
        <location>Bud tip</location>
    </subcellularLocation>
    <subcellularLocation>
        <location>Nucleus</location>
        <location>Nucleolus</location>
    </subcellularLocation>
</comment>
<comment type="PTM">
    <text evidence="6">phosphorylation by CK2 relieves translational repression activity.</text>
</comment>
<comment type="miscellaneous">
    <text evidence="3">Present with 21500 molecules/cell in log phase SD medium.</text>
</comment>
<comment type="similarity">
    <text evidence="8">Belongs to the PUF6 family.</text>
</comment>
<evidence type="ECO:0000255" key="1">
    <source>
        <dbReference type="PROSITE-ProRule" id="PRU00318"/>
    </source>
</evidence>
<evidence type="ECO:0000256" key="2">
    <source>
        <dbReference type="SAM" id="MobiDB-lite"/>
    </source>
</evidence>
<evidence type="ECO:0000269" key="3">
    <source>
    </source>
</evidence>
<evidence type="ECO:0000269" key="4">
    <source>
    </source>
</evidence>
<evidence type="ECO:0000269" key="5">
    <source>
    </source>
</evidence>
<evidence type="ECO:0000269" key="6">
    <source>
    </source>
</evidence>
<evidence type="ECO:0000269" key="7">
    <source>
    </source>
</evidence>
<evidence type="ECO:0000305" key="8"/>
<evidence type="ECO:0007744" key="9">
    <source>
    </source>
</evidence>
<evidence type="ECO:0007744" key="10">
    <source>
    </source>
</evidence>
<evidence type="ECO:0007744" key="11">
    <source>
    </source>
</evidence>
<accession>Q04373</accession>
<accession>D6VTB8</accession>
<reference key="1">
    <citation type="journal article" date="1997" name="Nature">
        <title>The nucleotide sequence of Saccharomyces cerevisiae chromosome IV.</title>
        <authorList>
            <person name="Jacq C."/>
            <person name="Alt-Moerbe J."/>
            <person name="Andre B."/>
            <person name="Arnold W."/>
            <person name="Bahr A."/>
            <person name="Ballesta J.P.G."/>
            <person name="Bargues M."/>
            <person name="Baron L."/>
            <person name="Becker A."/>
            <person name="Biteau N."/>
            <person name="Bloecker H."/>
            <person name="Blugeon C."/>
            <person name="Boskovic J."/>
            <person name="Brandt P."/>
            <person name="Brueckner M."/>
            <person name="Buitrago M.J."/>
            <person name="Coster F."/>
            <person name="Delaveau T."/>
            <person name="del Rey F."/>
            <person name="Dujon B."/>
            <person name="Eide L.G."/>
            <person name="Garcia-Cantalejo J.M."/>
            <person name="Goffeau A."/>
            <person name="Gomez-Peris A."/>
            <person name="Granotier C."/>
            <person name="Hanemann V."/>
            <person name="Hankeln T."/>
            <person name="Hoheisel J.D."/>
            <person name="Jaeger W."/>
            <person name="Jimenez A."/>
            <person name="Jonniaux J.-L."/>
            <person name="Kraemer C."/>
            <person name="Kuester H."/>
            <person name="Laamanen P."/>
            <person name="Legros Y."/>
            <person name="Louis E.J."/>
            <person name="Moeller-Rieker S."/>
            <person name="Monnet A."/>
            <person name="Moro M."/>
            <person name="Mueller-Auer S."/>
            <person name="Nussbaumer B."/>
            <person name="Paricio N."/>
            <person name="Paulin L."/>
            <person name="Perea J."/>
            <person name="Perez-Alonso M."/>
            <person name="Perez-Ortin J.E."/>
            <person name="Pohl T.M."/>
            <person name="Prydz H."/>
            <person name="Purnelle B."/>
            <person name="Rasmussen S.W."/>
            <person name="Remacha M.A."/>
            <person name="Revuelta J.L."/>
            <person name="Rieger M."/>
            <person name="Salom D."/>
            <person name="Saluz H.P."/>
            <person name="Saiz J.E."/>
            <person name="Saren A.-M."/>
            <person name="Schaefer M."/>
            <person name="Scharfe M."/>
            <person name="Schmidt E.R."/>
            <person name="Schneider C."/>
            <person name="Scholler P."/>
            <person name="Schwarz S."/>
            <person name="Soler-Mira A."/>
            <person name="Urrestarazu L.A."/>
            <person name="Verhasselt P."/>
            <person name="Vissers S."/>
            <person name="Voet M."/>
            <person name="Volckaert G."/>
            <person name="Wagner G."/>
            <person name="Wambutt R."/>
            <person name="Wedler E."/>
            <person name="Wedler H."/>
            <person name="Woelfl S."/>
            <person name="Harris D.E."/>
            <person name="Bowman S."/>
            <person name="Brown D."/>
            <person name="Churcher C.M."/>
            <person name="Connor R."/>
            <person name="Dedman K."/>
            <person name="Gentles S."/>
            <person name="Hamlin N."/>
            <person name="Hunt S."/>
            <person name="Jones L."/>
            <person name="McDonald S."/>
            <person name="Murphy L.D."/>
            <person name="Niblett D."/>
            <person name="Odell C."/>
            <person name="Oliver K."/>
            <person name="Rajandream M.A."/>
            <person name="Richards C."/>
            <person name="Shore L."/>
            <person name="Walsh S.V."/>
            <person name="Barrell B.G."/>
            <person name="Dietrich F.S."/>
            <person name="Mulligan J.T."/>
            <person name="Allen E."/>
            <person name="Araujo R."/>
            <person name="Aviles E."/>
            <person name="Berno A."/>
            <person name="Carpenter J."/>
            <person name="Chen E."/>
            <person name="Cherry J.M."/>
            <person name="Chung E."/>
            <person name="Duncan M."/>
            <person name="Hunicke-Smith S."/>
            <person name="Hyman R.W."/>
            <person name="Komp C."/>
            <person name="Lashkari D."/>
            <person name="Lew H."/>
            <person name="Lin D."/>
            <person name="Mosedale D."/>
            <person name="Nakahara K."/>
            <person name="Namath A."/>
            <person name="Oefner P."/>
            <person name="Oh C."/>
            <person name="Petel F.X."/>
            <person name="Roberts D."/>
            <person name="Schramm S."/>
            <person name="Schroeder M."/>
            <person name="Shogren T."/>
            <person name="Shroff N."/>
            <person name="Winant A."/>
            <person name="Yelton M.A."/>
            <person name="Botstein D."/>
            <person name="Davis R.W."/>
            <person name="Johnston M."/>
            <person name="Andrews S."/>
            <person name="Brinkman R."/>
            <person name="Cooper J."/>
            <person name="Ding H."/>
            <person name="Du Z."/>
            <person name="Favello A."/>
            <person name="Fulton L."/>
            <person name="Gattung S."/>
            <person name="Greco T."/>
            <person name="Hallsworth K."/>
            <person name="Hawkins J."/>
            <person name="Hillier L.W."/>
            <person name="Jier M."/>
            <person name="Johnson D."/>
            <person name="Johnston L."/>
            <person name="Kirsten J."/>
            <person name="Kucaba T."/>
            <person name="Langston Y."/>
            <person name="Latreille P."/>
            <person name="Le T."/>
            <person name="Mardis E."/>
            <person name="Menezes S."/>
            <person name="Miller N."/>
            <person name="Nhan M."/>
            <person name="Pauley A."/>
            <person name="Peluso D."/>
            <person name="Rifkin L."/>
            <person name="Riles L."/>
            <person name="Taich A."/>
            <person name="Trevaskis E."/>
            <person name="Vignati D."/>
            <person name="Wilcox L."/>
            <person name="Wohldman P."/>
            <person name="Vaudin M."/>
            <person name="Wilson R."/>
            <person name="Waterston R."/>
            <person name="Albermann K."/>
            <person name="Hani J."/>
            <person name="Heumann K."/>
            <person name="Kleine K."/>
            <person name="Mewes H.-W."/>
            <person name="Zollner A."/>
            <person name="Zaccaria P."/>
        </authorList>
    </citation>
    <scope>NUCLEOTIDE SEQUENCE [LARGE SCALE GENOMIC DNA]</scope>
    <source>
        <strain>ATCC 204508 / S288c</strain>
    </source>
</reference>
<reference key="2">
    <citation type="journal article" date="2014" name="G3 (Bethesda)">
        <title>The reference genome sequence of Saccharomyces cerevisiae: Then and now.</title>
        <authorList>
            <person name="Engel S.R."/>
            <person name="Dietrich F.S."/>
            <person name="Fisk D.G."/>
            <person name="Binkley G."/>
            <person name="Balakrishnan R."/>
            <person name="Costanzo M.C."/>
            <person name="Dwight S.S."/>
            <person name="Hitz B.C."/>
            <person name="Karra K."/>
            <person name="Nash R.S."/>
            <person name="Weng S."/>
            <person name="Wong E.D."/>
            <person name="Lloyd P."/>
            <person name="Skrzypek M.S."/>
            <person name="Miyasato S.R."/>
            <person name="Simison M."/>
            <person name="Cherry J.M."/>
        </authorList>
    </citation>
    <scope>GENOME REANNOTATION</scope>
    <source>
        <strain>ATCC 204508 / S288c</strain>
    </source>
</reference>
<reference key="3">
    <citation type="journal article" date="2003" name="Nature">
        <title>Global analysis of protein localization in budding yeast.</title>
        <authorList>
            <person name="Huh W.-K."/>
            <person name="Falvo J.V."/>
            <person name="Gerke L.C."/>
            <person name="Carroll A.S."/>
            <person name="Howson R.W."/>
            <person name="Weissman J.S."/>
            <person name="O'Shea E.K."/>
        </authorList>
    </citation>
    <scope>SUBCELLULAR LOCATION [LARGE SCALE ANALYSIS]</scope>
</reference>
<reference key="4">
    <citation type="journal article" date="2003" name="Nature">
        <title>Global analysis of protein expression in yeast.</title>
        <authorList>
            <person name="Ghaemmaghami S."/>
            <person name="Huh W.-K."/>
            <person name="Bower K."/>
            <person name="Howson R.W."/>
            <person name="Belle A."/>
            <person name="Dephoure N."/>
            <person name="O'Shea E.K."/>
            <person name="Weissman J.S."/>
        </authorList>
    </citation>
    <scope>LEVEL OF PROTEIN EXPRESSION [LARGE SCALE ANALYSIS]</scope>
</reference>
<reference key="5">
    <citation type="journal article" date="2004" name="Genes Dev.">
        <title>A new yeast PUF family protein, Puf6p, represses ASH1 mRNA translation and is required for its localization.</title>
        <authorList>
            <person name="Gu W."/>
            <person name="Deng Y."/>
            <person name="Zenklusen D."/>
            <person name="Singer R.H."/>
        </authorList>
    </citation>
    <scope>FUNCTION</scope>
    <scope>SUBUNIT</scope>
    <scope>INTERACTION WITH SHE2</scope>
    <scope>IDENTIFICATION BY MASS SPECTROMETRY</scope>
    <scope>SUBCELLULAR LOCATION</scope>
</reference>
<reference key="6">
    <citation type="journal article" date="2007" name="J. Proteome Res.">
        <title>Large-scale phosphorylation analysis of alpha-factor-arrested Saccharomyces cerevisiae.</title>
        <authorList>
            <person name="Li X."/>
            <person name="Gerber S.A."/>
            <person name="Rudner A.D."/>
            <person name="Beausoleil S.A."/>
            <person name="Haas W."/>
            <person name="Villen J."/>
            <person name="Elias J.E."/>
            <person name="Gygi S.P."/>
        </authorList>
    </citation>
    <scope>PHOSPHORYLATION [LARGE SCALE ANALYSIS] AT SER-34 AND SER-35</scope>
    <scope>IDENTIFICATION BY MASS SPECTROMETRY [LARGE SCALE ANALYSIS]</scope>
    <source>
        <strain>ADR376</strain>
    </source>
</reference>
<reference key="7">
    <citation type="journal article" date="2007" name="Proc. Natl. Acad. Sci. U.S.A.">
        <title>Analysis of phosphorylation sites on proteins from Saccharomyces cerevisiae by electron transfer dissociation (ETD) mass spectrometry.</title>
        <authorList>
            <person name="Chi A."/>
            <person name="Huttenhower C."/>
            <person name="Geer L.Y."/>
            <person name="Coon J.J."/>
            <person name="Syka J.E.P."/>
            <person name="Bai D.L."/>
            <person name="Shabanowitz J."/>
            <person name="Burke D.J."/>
            <person name="Troyanskaya O.G."/>
            <person name="Hunt D.F."/>
        </authorList>
    </citation>
    <scope>IDENTIFICATION BY MASS SPECTROMETRY [LARGE SCALE ANALYSIS]</scope>
</reference>
<reference key="8">
    <citation type="journal article" date="2008" name="Genes Dev.">
        <title>Translation of ASH1 mRNA is repressed by Puf6p-Fun12p/eIF5B interaction and released by CK2 phosphorylation.</title>
        <authorList>
            <person name="Deng Y."/>
            <person name="Singer R.H."/>
            <person name="Gu W."/>
        </authorList>
    </citation>
    <scope>FUNCTION</scope>
</reference>
<reference key="9">
    <citation type="journal article" date="2008" name="Genetics">
        <title>Nonsense-mediated decay of ash1 nonsense transcripts in Saccharomyces cerevisiae.</title>
        <authorList>
            <person name="Zheng W."/>
            <person name="Finkel J.S."/>
            <person name="Landers S.M."/>
            <person name="Long R.M."/>
            <person name="Culbertson M.R."/>
        </authorList>
    </citation>
    <scope>FUNCTION</scope>
    <scope>INTERACTION WITH FUN12</scope>
    <scope>PHOSPHORYLATION AT SER-31; SER-34 AND SER-35</scope>
    <scope>IDENTIFICATION BY MASS SPECTROMETRY</scope>
    <scope>MUTAGENESIS OF SER-31; SER-34 AND SER-35</scope>
</reference>
<reference key="10">
    <citation type="journal article" date="2008" name="Mol. Cell. Proteomics">
        <title>A multidimensional chromatography technology for in-depth phosphoproteome analysis.</title>
        <authorList>
            <person name="Albuquerque C.P."/>
            <person name="Smolka M.B."/>
            <person name="Payne S.H."/>
            <person name="Bafna V."/>
            <person name="Eng J."/>
            <person name="Zhou H."/>
        </authorList>
    </citation>
    <scope>PHOSPHORYLATION [LARGE SCALE ANALYSIS] AT SER-34 AND SER-35</scope>
    <scope>IDENTIFICATION BY MASS SPECTROMETRY [LARGE SCALE ANALYSIS]</scope>
</reference>
<reference key="11">
    <citation type="journal article" date="2009" name="Mol. Biol. Cell">
        <title>Nuclear shuttling of She2p couples ASH1 mRNA localization to its translational repression by recruiting Loc1p and Puf6p.</title>
        <authorList>
            <person name="Shen Z."/>
            <person name="Paquin N."/>
            <person name="Forget A."/>
            <person name="Chartrand P."/>
        </authorList>
    </citation>
    <scope>INTERACTION WITH SHE2</scope>
</reference>
<reference key="12">
    <citation type="journal article" date="2009" name="Science">
        <title>Global analysis of Cdk1 substrate phosphorylation sites provides insights into evolution.</title>
        <authorList>
            <person name="Holt L.J."/>
            <person name="Tuch B.B."/>
            <person name="Villen J."/>
            <person name="Johnson A.D."/>
            <person name="Gygi S.P."/>
            <person name="Morgan D.O."/>
        </authorList>
    </citation>
    <scope>PHOSPHORYLATION [LARGE SCALE ANALYSIS] AT SER-34 AND SER-35</scope>
    <scope>IDENTIFICATION BY MASS SPECTROMETRY [LARGE SCALE ANALYSIS]</scope>
</reference>
<reference key="13">
    <citation type="journal article" date="2012" name="Proc. Natl. Acad. Sci. U.S.A.">
        <title>N-terminal acetylome analyses and functional insights of the N-terminal acetyltransferase NatB.</title>
        <authorList>
            <person name="Van Damme P."/>
            <person name="Lasa M."/>
            <person name="Polevoda B."/>
            <person name="Gazquez C."/>
            <person name="Elosegui-Artola A."/>
            <person name="Kim D.S."/>
            <person name="De Juan-Pardo E."/>
            <person name="Demeyer K."/>
            <person name="Hole K."/>
            <person name="Larrea E."/>
            <person name="Timmerman E."/>
            <person name="Prieto J."/>
            <person name="Arnesen T."/>
            <person name="Sherman F."/>
            <person name="Gevaert K."/>
            <person name="Aldabe R."/>
        </authorList>
    </citation>
    <scope>IDENTIFICATION BY MASS SPECTROMETRY [LARGE SCALE ANALYSIS]</scope>
</reference>
<protein>
    <recommendedName>
        <fullName>Pumilio homology domain family member 6</fullName>
    </recommendedName>
</protein>
<proteinExistence type="evidence at protein level"/>
<name>PUF6_YEAST</name>
<sequence length="656" mass="75106">MAPLTKKTNGKRSAKEVSHSEKKLAKKPRISIDSSDEESELSKKEDAVSSSSDDDDLDDLSTSDSEAEEEADELDISDDSEEHENENEEKEGKDKSEGGENGNHTEQRKLLKERKMQRKSGTQVQQIKSVWERLRVKTPPLPKQIREKLSNEIWELSKDCISDLVLKHDASRIVQTLVKYSSKDRREQIVDALKGKFYVLATSAYGKYLLVKLLHYGSRSSRQTIINELHGSLRKLMRHREGAYVVEDLFVLYATHEQRQQMIKEFWGSEYAVFRETHKDLTIEKVCESSIEKRNIIARNLIGTITASVEKGSTGFQILHAAMREYVKIANEKEISEMIELLHEQFAELVHTPEGSDVACTLVARANAKERKLILKALKNHAEKLIKNEYGNIVFITILNCVDDTVLVFKTFSPTVKEHLQEFIIDKFGRRPWLYILLGLDGKYFSPIVKNELLRYIELSKATSKKDPLQRRHELLSKFAPMFLSTISKDYSSILTENLGCQFIAEVLINDELYAQLNEKDQEKYQQVLNNILTTFKGDITEEEHPIHRAFSTRLLKALIQGGKWNNKEKKVIPLKNVQGLGVPFAEKLYDEIIDSSNLLEWINNADSSFTIVALYETLKDQKEGKPFLKDLRGVQSKITTDESNKGSQLLAKLLK</sequence>
<organism>
    <name type="scientific">Saccharomyces cerevisiae (strain ATCC 204508 / S288c)</name>
    <name type="common">Baker's yeast</name>
    <dbReference type="NCBI Taxonomy" id="559292"/>
    <lineage>
        <taxon>Eukaryota</taxon>
        <taxon>Fungi</taxon>
        <taxon>Dikarya</taxon>
        <taxon>Ascomycota</taxon>
        <taxon>Saccharomycotina</taxon>
        <taxon>Saccharomycetes</taxon>
        <taxon>Saccharomycetales</taxon>
        <taxon>Saccharomycetaceae</taxon>
        <taxon>Saccharomyces</taxon>
    </lineage>
</organism>
<keyword id="KW-0539">Nucleus</keyword>
<keyword id="KW-0597">Phosphoprotein</keyword>
<keyword id="KW-1185">Reference proteome</keyword>
<keyword id="KW-0677">Repeat</keyword>
<keyword id="KW-0678">Repressor</keyword>
<keyword id="KW-0694">RNA-binding</keyword>
<keyword id="KW-0810">Translation regulation</keyword>
<keyword id="KW-0813">Transport</keyword>